<proteinExistence type="inferred from homology"/>
<evidence type="ECO:0000250" key="1"/>
<evidence type="ECO:0000255" key="2">
    <source>
        <dbReference type="PROSITE-ProRule" id="PRU00156"/>
    </source>
</evidence>
<evidence type="ECO:0000305" key="3"/>
<gene>
    <name type="primary">ppiA</name>
    <name type="ordered locus">MT0011</name>
</gene>
<reference key="1">
    <citation type="journal article" date="2002" name="J. Bacteriol.">
        <title>Whole-genome comparison of Mycobacterium tuberculosis clinical and laboratory strains.</title>
        <authorList>
            <person name="Fleischmann R.D."/>
            <person name="Alland D."/>
            <person name="Eisen J.A."/>
            <person name="Carpenter L."/>
            <person name="White O."/>
            <person name="Peterson J.D."/>
            <person name="DeBoy R.T."/>
            <person name="Dodson R.J."/>
            <person name="Gwinn M.L."/>
            <person name="Haft D.H."/>
            <person name="Hickey E.K."/>
            <person name="Kolonay J.F."/>
            <person name="Nelson W.C."/>
            <person name="Umayam L.A."/>
            <person name="Ermolaeva M.D."/>
            <person name="Salzberg S.L."/>
            <person name="Delcher A."/>
            <person name="Utterback T.R."/>
            <person name="Weidman J.F."/>
            <person name="Khouri H.M."/>
            <person name="Gill J."/>
            <person name="Mikula A."/>
            <person name="Bishai W."/>
            <person name="Jacobs W.R. Jr."/>
            <person name="Venter J.C."/>
            <person name="Fraser C.M."/>
        </authorList>
    </citation>
    <scope>NUCLEOTIDE SEQUENCE [LARGE SCALE GENOMIC DNA]</scope>
    <source>
        <strain>CDC 1551 / Oshkosh</strain>
    </source>
</reference>
<comment type="function">
    <text evidence="1">PPIases accelerate the folding of proteins. It catalyzes the cis-trans isomerization of proline imidic peptide bonds in oligopeptides (By similarity).</text>
</comment>
<comment type="catalytic activity">
    <reaction>
        <text>[protein]-peptidylproline (omega=180) = [protein]-peptidylproline (omega=0)</text>
        <dbReference type="Rhea" id="RHEA:16237"/>
        <dbReference type="Rhea" id="RHEA-COMP:10747"/>
        <dbReference type="Rhea" id="RHEA-COMP:10748"/>
        <dbReference type="ChEBI" id="CHEBI:83833"/>
        <dbReference type="ChEBI" id="CHEBI:83834"/>
        <dbReference type="EC" id="5.2.1.8"/>
    </reaction>
</comment>
<comment type="subunit">
    <text evidence="1">Homodimer.</text>
</comment>
<comment type="subcellular location">
    <subcellularLocation>
        <location evidence="1">Cytoplasm</location>
    </subcellularLocation>
</comment>
<comment type="similarity">
    <text evidence="3">Belongs to the cyclophilin-type PPIase family.</text>
</comment>
<feature type="chain" id="PRO_0000428112" description="Peptidyl-prolyl cis-trans isomerase A">
    <location>
        <begin position="1"/>
        <end position="182"/>
    </location>
</feature>
<feature type="domain" description="PPIase cyclophilin-type" evidence="2">
    <location>
        <begin position="13"/>
        <end position="181"/>
    </location>
</feature>
<sequence>MADCDSVTNSPLATATATLHTNRGDIKIALFGNHAPKTVANFVGLAQGTKDYSTQNASGGPSGPFYDGAVFHRVIQGFMIQGGDPTGTGRGGPGYKFADEFHPELQFDKPYLLAMANAGPGTNGSQFFITVGKTPHLNRRHTIFGEVIDAESQRVVEAISKTATDGNDRPTDPVVIESITIS</sequence>
<dbReference type="EC" id="5.2.1.8"/>
<dbReference type="EMBL" id="AE000516">
    <property type="protein sequence ID" value="AAK44233.1"/>
    <property type="molecule type" value="Genomic_DNA"/>
</dbReference>
<dbReference type="PIR" id="G70698">
    <property type="entry name" value="G70698"/>
</dbReference>
<dbReference type="RefSeq" id="WP_003400321.1">
    <property type="nucleotide sequence ID" value="NZ_KK341227.1"/>
</dbReference>
<dbReference type="SMR" id="P9WHW2"/>
<dbReference type="GeneID" id="45423968"/>
<dbReference type="KEGG" id="mtc:MT0011"/>
<dbReference type="PATRIC" id="fig|83331.31.peg.12"/>
<dbReference type="HOGENOM" id="CLU_012062_16_3_11"/>
<dbReference type="Proteomes" id="UP000001020">
    <property type="component" value="Chromosome"/>
</dbReference>
<dbReference type="GO" id="GO:0005737">
    <property type="term" value="C:cytoplasm"/>
    <property type="evidence" value="ECO:0007669"/>
    <property type="project" value="UniProtKB-SubCell"/>
</dbReference>
<dbReference type="GO" id="GO:0003755">
    <property type="term" value="F:peptidyl-prolyl cis-trans isomerase activity"/>
    <property type="evidence" value="ECO:0007669"/>
    <property type="project" value="UniProtKB-KW"/>
</dbReference>
<dbReference type="GO" id="GO:0006457">
    <property type="term" value="P:protein folding"/>
    <property type="evidence" value="ECO:0007669"/>
    <property type="project" value="InterPro"/>
</dbReference>
<dbReference type="CDD" id="cd00317">
    <property type="entry name" value="cyclophilin"/>
    <property type="match status" value="1"/>
</dbReference>
<dbReference type="FunFam" id="2.40.100.10:FF:000028">
    <property type="entry name" value="Peptidyl-prolyl cis-trans isomerase"/>
    <property type="match status" value="1"/>
</dbReference>
<dbReference type="Gene3D" id="2.40.100.10">
    <property type="entry name" value="Cyclophilin-like"/>
    <property type="match status" value="1"/>
</dbReference>
<dbReference type="InterPro" id="IPR029000">
    <property type="entry name" value="Cyclophilin-like_dom_sf"/>
</dbReference>
<dbReference type="InterPro" id="IPR024936">
    <property type="entry name" value="Cyclophilin-type_PPIase"/>
</dbReference>
<dbReference type="InterPro" id="IPR020892">
    <property type="entry name" value="Cyclophilin-type_PPIase_CS"/>
</dbReference>
<dbReference type="InterPro" id="IPR002130">
    <property type="entry name" value="Cyclophilin-type_PPIase_dom"/>
</dbReference>
<dbReference type="InterPro" id="IPR044666">
    <property type="entry name" value="Cyclophilin_A-like"/>
</dbReference>
<dbReference type="PANTHER" id="PTHR45625">
    <property type="entry name" value="PEPTIDYL-PROLYL CIS-TRANS ISOMERASE-RELATED"/>
    <property type="match status" value="1"/>
</dbReference>
<dbReference type="PANTHER" id="PTHR45625:SF4">
    <property type="entry name" value="PEPTIDYLPROLYL ISOMERASE DOMAIN AND WD REPEAT-CONTAINING PROTEIN 1"/>
    <property type="match status" value="1"/>
</dbReference>
<dbReference type="Pfam" id="PF00160">
    <property type="entry name" value="Pro_isomerase"/>
    <property type="match status" value="1"/>
</dbReference>
<dbReference type="PIRSF" id="PIRSF001467">
    <property type="entry name" value="Peptidylpro_ismrse"/>
    <property type="match status" value="1"/>
</dbReference>
<dbReference type="PRINTS" id="PR00153">
    <property type="entry name" value="CSAPPISMRASE"/>
</dbReference>
<dbReference type="SUPFAM" id="SSF50891">
    <property type="entry name" value="Cyclophilin-like"/>
    <property type="match status" value="1"/>
</dbReference>
<dbReference type="PROSITE" id="PS00170">
    <property type="entry name" value="CSA_PPIASE_1"/>
    <property type="match status" value="1"/>
</dbReference>
<dbReference type="PROSITE" id="PS50072">
    <property type="entry name" value="CSA_PPIASE_2"/>
    <property type="match status" value="1"/>
</dbReference>
<keyword id="KW-0963">Cytoplasm</keyword>
<keyword id="KW-0413">Isomerase</keyword>
<keyword id="KW-1185">Reference proteome</keyword>
<keyword id="KW-0697">Rotamase</keyword>
<protein>
    <recommendedName>
        <fullName>Peptidyl-prolyl cis-trans isomerase A</fullName>
        <shortName>PPIase A</shortName>
        <ecNumber>5.2.1.8</ecNumber>
    </recommendedName>
    <alternativeName>
        <fullName>Cyclophilin</fullName>
    </alternativeName>
    <alternativeName>
        <fullName>Rotamase A</fullName>
    </alternativeName>
</protein>
<name>PPIA_MYCTO</name>
<organism>
    <name type="scientific">Mycobacterium tuberculosis (strain CDC 1551 / Oshkosh)</name>
    <dbReference type="NCBI Taxonomy" id="83331"/>
    <lineage>
        <taxon>Bacteria</taxon>
        <taxon>Bacillati</taxon>
        <taxon>Actinomycetota</taxon>
        <taxon>Actinomycetes</taxon>
        <taxon>Mycobacteriales</taxon>
        <taxon>Mycobacteriaceae</taxon>
        <taxon>Mycobacterium</taxon>
        <taxon>Mycobacterium tuberculosis complex</taxon>
    </lineage>
</organism>
<accession>P9WHW2</accession>
<accession>L0T5F1</accession>
<accession>P65762</accession>
<accession>P71578</accession>